<organism>
    <name type="scientific">Shigella boydii serotype 18 (strain CDC 3083-94 / BS512)</name>
    <dbReference type="NCBI Taxonomy" id="344609"/>
    <lineage>
        <taxon>Bacteria</taxon>
        <taxon>Pseudomonadati</taxon>
        <taxon>Pseudomonadota</taxon>
        <taxon>Gammaproteobacteria</taxon>
        <taxon>Enterobacterales</taxon>
        <taxon>Enterobacteriaceae</taxon>
        <taxon>Shigella</taxon>
    </lineage>
</organism>
<evidence type="ECO:0000255" key="1">
    <source>
        <dbReference type="HAMAP-Rule" id="MF_01347"/>
    </source>
</evidence>
<feature type="chain" id="PRO_1000143547" description="ATP synthase subunit beta">
    <location>
        <begin position="1"/>
        <end position="460"/>
    </location>
</feature>
<feature type="binding site" evidence="1">
    <location>
        <begin position="150"/>
        <end position="157"/>
    </location>
    <ligand>
        <name>ATP</name>
        <dbReference type="ChEBI" id="CHEBI:30616"/>
    </ligand>
</feature>
<comment type="function">
    <text evidence="1">Produces ATP from ADP in the presence of a proton gradient across the membrane. The catalytic sites are hosted primarily by the beta subunits.</text>
</comment>
<comment type="catalytic activity">
    <reaction evidence="1">
        <text>ATP + H2O + 4 H(+)(in) = ADP + phosphate + 5 H(+)(out)</text>
        <dbReference type="Rhea" id="RHEA:57720"/>
        <dbReference type="ChEBI" id="CHEBI:15377"/>
        <dbReference type="ChEBI" id="CHEBI:15378"/>
        <dbReference type="ChEBI" id="CHEBI:30616"/>
        <dbReference type="ChEBI" id="CHEBI:43474"/>
        <dbReference type="ChEBI" id="CHEBI:456216"/>
        <dbReference type="EC" id="7.1.2.2"/>
    </reaction>
</comment>
<comment type="subunit">
    <text evidence="1">F-type ATPases have 2 components, CF(1) - the catalytic core - and CF(0) - the membrane proton channel. CF(1) has five subunits: alpha(3), beta(3), gamma(1), delta(1), epsilon(1). CF(0) has three main subunits: a(1), b(2) and c(9-12). The alpha and beta chains form an alternating ring which encloses part of the gamma chain. CF(1) is attached to CF(0) by a central stalk formed by the gamma and epsilon chains, while a peripheral stalk is formed by the delta and b chains.</text>
</comment>
<comment type="subcellular location">
    <subcellularLocation>
        <location evidence="1">Cell inner membrane</location>
        <topology evidence="1">Peripheral membrane protein</topology>
    </subcellularLocation>
</comment>
<comment type="similarity">
    <text evidence="1">Belongs to the ATPase alpha/beta chains family.</text>
</comment>
<proteinExistence type="inferred from homology"/>
<accession>B2TUP3</accession>
<keyword id="KW-0066">ATP synthesis</keyword>
<keyword id="KW-0067">ATP-binding</keyword>
<keyword id="KW-0997">Cell inner membrane</keyword>
<keyword id="KW-1003">Cell membrane</keyword>
<keyword id="KW-0139">CF(1)</keyword>
<keyword id="KW-0375">Hydrogen ion transport</keyword>
<keyword id="KW-0406">Ion transport</keyword>
<keyword id="KW-0472">Membrane</keyword>
<keyword id="KW-0547">Nucleotide-binding</keyword>
<keyword id="KW-1185">Reference proteome</keyword>
<keyword id="KW-1278">Translocase</keyword>
<keyword id="KW-0813">Transport</keyword>
<gene>
    <name evidence="1" type="primary">atpD</name>
    <name type="ordered locus">SbBS512_E4189</name>
</gene>
<protein>
    <recommendedName>
        <fullName evidence="1">ATP synthase subunit beta</fullName>
        <ecNumber evidence="1">7.1.2.2</ecNumber>
    </recommendedName>
    <alternativeName>
        <fullName evidence="1">ATP synthase F1 sector subunit beta</fullName>
    </alternativeName>
    <alternativeName>
        <fullName evidence="1">F-ATPase subunit beta</fullName>
    </alternativeName>
</protein>
<sequence length="460" mass="50325">MATGKIVQVIGAVVDVEFPQDAVPRVYDALEVQNGNERLVLEVQQQLGGGIVRTIAMGSSDGLRRGLDVKDLEHPIEVPVGKATLGRIMNVLGEPVDMKGEIGEEERWAIHRAAPSYEELSNSQELLETGIKVIDLMCPFAKGGKVGLFGGAGVGKTVNMMELIRNIAIEHSGYSVFAGVGERTREGNDFYHEMTDSNVIDKVSLVYGQMNEPPGNRLRVALTGLTMAEKFRDEGRDVLLFVDNIYRYTLAGTEVSALLGRMPSAVGYQPTLAEEMGVLQERITSTKTGSITSVQAVYVPADDLTDPSPATTFAHLDATVVLSRQIASLGIYPAVDPLDSTSRQLDPLVVGQEHYDTARGVQSILQRYQELKDIIAILGMDELSEEDKLVVARARKIQRFLSQPFFVAEVFTGSPGKYVSLKDTIRGFKGIMEGEYDHLPEQAFYMVGSIEEAVEKAKKL</sequence>
<dbReference type="EC" id="7.1.2.2" evidence="1"/>
<dbReference type="EMBL" id="CP001063">
    <property type="protein sequence ID" value="ACD09187.1"/>
    <property type="molecule type" value="Genomic_DNA"/>
</dbReference>
<dbReference type="RefSeq" id="WP_000190506.1">
    <property type="nucleotide sequence ID" value="NC_010658.1"/>
</dbReference>
<dbReference type="SMR" id="B2TUP3"/>
<dbReference type="STRING" id="344609.SbBS512_E4189"/>
<dbReference type="GeneID" id="93778235"/>
<dbReference type="KEGG" id="sbc:SbBS512_E4189"/>
<dbReference type="HOGENOM" id="CLU_022398_0_2_6"/>
<dbReference type="Proteomes" id="UP000001030">
    <property type="component" value="Chromosome"/>
</dbReference>
<dbReference type="GO" id="GO:0005886">
    <property type="term" value="C:plasma membrane"/>
    <property type="evidence" value="ECO:0007669"/>
    <property type="project" value="UniProtKB-SubCell"/>
</dbReference>
<dbReference type="GO" id="GO:0045259">
    <property type="term" value="C:proton-transporting ATP synthase complex"/>
    <property type="evidence" value="ECO:0007669"/>
    <property type="project" value="UniProtKB-KW"/>
</dbReference>
<dbReference type="GO" id="GO:0005524">
    <property type="term" value="F:ATP binding"/>
    <property type="evidence" value="ECO:0007669"/>
    <property type="project" value="UniProtKB-UniRule"/>
</dbReference>
<dbReference type="GO" id="GO:0016887">
    <property type="term" value="F:ATP hydrolysis activity"/>
    <property type="evidence" value="ECO:0007669"/>
    <property type="project" value="InterPro"/>
</dbReference>
<dbReference type="GO" id="GO:0046933">
    <property type="term" value="F:proton-transporting ATP synthase activity, rotational mechanism"/>
    <property type="evidence" value="ECO:0007669"/>
    <property type="project" value="UniProtKB-UniRule"/>
</dbReference>
<dbReference type="CDD" id="cd18110">
    <property type="entry name" value="ATP-synt_F1_beta_C"/>
    <property type="match status" value="1"/>
</dbReference>
<dbReference type="CDD" id="cd18115">
    <property type="entry name" value="ATP-synt_F1_beta_N"/>
    <property type="match status" value="1"/>
</dbReference>
<dbReference type="CDD" id="cd01133">
    <property type="entry name" value="F1-ATPase_beta_CD"/>
    <property type="match status" value="1"/>
</dbReference>
<dbReference type="FunFam" id="1.10.1140.10:FF:000001">
    <property type="entry name" value="ATP synthase subunit beta"/>
    <property type="match status" value="1"/>
</dbReference>
<dbReference type="FunFam" id="2.40.10.170:FF:000003">
    <property type="entry name" value="ATP synthase subunit beta"/>
    <property type="match status" value="1"/>
</dbReference>
<dbReference type="FunFam" id="3.40.50.300:FF:000004">
    <property type="entry name" value="ATP synthase subunit beta"/>
    <property type="match status" value="1"/>
</dbReference>
<dbReference type="Gene3D" id="2.40.10.170">
    <property type="match status" value="1"/>
</dbReference>
<dbReference type="Gene3D" id="1.10.1140.10">
    <property type="entry name" value="Bovine Mitochondrial F1-atpase, Atp Synthase Beta Chain, Chain D, domain 3"/>
    <property type="match status" value="1"/>
</dbReference>
<dbReference type="Gene3D" id="3.40.50.300">
    <property type="entry name" value="P-loop containing nucleotide triphosphate hydrolases"/>
    <property type="match status" value="1"/>
</dbReference>
<dbReference type="HAMAP" id="MF_01347">
    <property type="entry name" value="ATP_synth_beta_bact"/>
    <property type="match status" value="1"/>
</dbReference>
<dbReference type="InterPro" id="IPR003593">
    <property type="entry name" value="AAA+_ATPase"/>
</dbReference>
<dbReference type="InterPro" id="IPR055190">
    <property type="entry name" value="ATP-synt_VA_C"/>
</dbReference>
<dbReference type="InterPro" id="IPR005722">
    <property type="entry name" value="ATP_synth_F1_bsu"/>
</dbReference>
<dbReference type="InterPro" id="IPR020003">
    <property type="entry name" value="ATPase_a/bsu_AS"/>
</dbReference>
<dbReference type="InterPro" id="IPR050053">
    <property type="entry name" value="ATPase_alpha/beta_chains"/>
</dbReference>
<dbReference type="InterPro" id="IPR004100">
    <property type="entry name" value="ATPase_F1/V1/A1_a/bsu_N"/>
</dbReference>
<dbReference type="InterPro" id="IPR036121">
    <property type="entry name" value="ATPase_F1/V1/A1_a/bsu_N_sf"/>
</dbReference>
<dbReference type="InterPro" id="IPR000194">
    <property type="entry name" value="ATPase_F1/V1/A1_a/bsu_nucl-bd"/>
</dbReference>
<dbReference type="InterPro" id="IPR024034">
    <property type="entry name" value="ATPase_F1/V1_b/a_C"/>
</dbReference>
<dbReference type="InterPro" id="IPR027417">
    <property type="entry name" value="P-loop_NTPase"/>
</dbReference>
<dbReference type="NCBIfam" id="TIGR01039">
    <property type="entry name" value="atpD"/>
    <property type="match status" value="1"/>
</dbReference>
<dbReference type="PANTHER" id="PTHR15184">
    <property type="entry name" value="ATP SYNTHASE"/>
    <property type="match status" value="1"/>
</dbReference>
<dbReference type="PANTHER" id="PTHR15184:SF71">
    <property type="entry name" value="ATP SYNTHASE SUBUNIT BETA, MITOCHONDRIAL"/>
    <property type="match status" value="1"/>
</dbReference>
<dbReference type="Pfam" id="PF00006">
    <property type="entry name" value="ATP-synt_ab"/>
    <property type="match status" value="1"/>
</dbReference>
<dbReference type="Pfam" id="PF02874">
    <property type="entry name" value="ATP-synt_ab_N"/>
    <property type="match status" value="1"/>
</dbReference>
<dbReference type="Pfam" id="PF22919">
    <property type="entry name" value="ATP-synt_VA_C"/>
    <property type="match status" value="1"/>
</dbReference>
<dbReference type="SMART" id="SM00382">
    <property type="entry name" value="AAA"/>
    <property type="match status" value="1"/>
</dbReference>
<dbReference type="SUPFAM" id="SSF47917">
    <property type="entry name" value="C-terminal domain of alpha and beta subunits of F1 ATP synthase"/>
    <property type="match status" value="1"/>
</dbReference>
<dbReference type="SUPFAM" id="SSF50615">
    <property type="entry name" value="N-terminal domain of alpha and beta subunits of F1 ATP synthase"/>
    <property type="match status" value="1"/>
</dbReference>
<dbReference type="SUPFAM" id="SSF52540">
    <property type="entry name" value="P-loop containing nucleoside triphosphate hydrolases"/>
    <property type="match status" value="1"/>
</dbReference>
<dbReference type="PROSITE" id="PS00152">
    <property type="entry name" value="ATPASE_ALPHA_BETA"/>
    <property type="match status" value="1"/>
</dbReference>
<name>ATPB_SHIB3</name>
<reference key="1">
    <citation type="submission" date="2008-05" db="EMBL/GenBank/DDBJ databases">
        <title>Complete sequence of Shigella boydii serotype 18 strain BS512.</title>
        <authorList>
            <person name="Rasko D.A."/>
            <person name="Rosovitz M."/>
            <person name="Maurelli A.T."/>
            <person name="Myers G."/>
            <person name="Seshadri R."/>
            <person name="Cer R."/>
            <person name="Jiang L."/>
            <person name="Ravel J."/>
            <person name="Sebastian Y."/>
        </authorList>
    </citation>
    <scope>NUCLEOTIDE SEQUENCE [LARGE SCALE GENOMIC DNA]</scope>
    <source>
        <strain>CDC 3083-94 / BS512</strain>
    </source>
</reference>